<organism>
    <name type="scientific">Yersinia pestis</name>
    <dbReference type="NCBI Taxonomy" id="632"/>
    <lineage>
        <taxon>Bacteria</taxon>
        <taxon>Pseudomonadati</taxon>
        <taxon>Pseudomonadota</taxon>
        <taxon>Gammaproteobacteria</taxon>
        <taxon>Enterobacterales</taxon>
        <taxon>Yersiniaceae</taxon>
        <taxon>Yersinia</taxon>
    </lineage>
</organism>
<reference key="1">
    <citation type="journal article" date="2001" name="Nature">
        <title>Genome sequence of Yersinia pestis, the causative agent of plague.</title>
        <authorList>
            <person name="Parkhill J."/>
            <person name="Wren B.W."/>
            <person name="Thomson N.R."/>
            <person name="Titball R.W."/>
            <person name="Holden M.T.G."/>
            <person name="Prentice M.B."/>
            <person name="Sebaihia M."/>
            <person name="James K.D."/>
            <person name="Churcher C.M."/>
            <person name="Mungall K.L."/>
            <person name="Baker S."/>
            <person name="Basham D."/>
            <person name="Bentley S.D."/>
            <person name="Brooks K."/>
            <person name="Cerdeno-Tarraga A.-M."/>
            <person name="Chillingworth T."/>
            <person name="Cronin A."/>
            <person name="Davies R.M."/>
            <person name="Davis P."/>
            <person name="Dougan G."/>
            <person name="Feltwell T."/>
            <person name="Hamlin N."/>
            <person name="Holroyd S."/>
            <person name="Jagels K."/>
            <person name="Karlyshev A.V."/>
            <person name="Leather S."/>
            <person name="Moule S."/>
            <person name="Oyston P.C.F."/>
            <person name="Quail M.A."/>
            <person name="Rutherford K.M."/>
            <person name="Simmonds M."/>
            <person name="Skelton J."/>
            <person name="Stevens K."/>
            <person name="Whitehead S."/>
            <person name="Barrell B.G."/>
        </authorList>
    </citation>
    <scope>NUCLEOTIDE SEQUENCE [LARGE SCALE GENOMIC DNA]</scope>
    <source>
        <strain>CO-92 / Biovar Orientalis</strain>
    </source>
</reference>
<reference key="2">
    <citation type="journal article" date="2002" name="J. Bacteriol.">
        <title>Genome sequence of Yersinia pestis KIM.</title>
        <authorList>
            <person name="Deng W."/>
            <person name="Burland V."/>
            <person name="Plunkett G. III"/>
            <person name="Boutin A."/>
            <person name="Mayhew G.F."/>
            <person name="Liss P."/>
            <person name="Perna N.T."/>
            <person name="Rose D.J."/>
            <person name="Mau B."/>
            <person name="Zhou S."/>
            <person name="Schwartz D.C."/>
            <person name="Fetherston J.D."/>
            <person name="Lindler L.E."/>
            <person name="Brubaker R.R."/>
            <person name="Plano G.V."/>
            <person name="Straley S.C."/>
            <person name="McDonough K.A."/>
            <person name="Nilles M.L."/>
            <person name="Matson J.S."/>
            <person name="Blattner F.R."/>
            <person name="Perry R.D."/>
        </authorList>
    </citation>
    <scope>NUCLEOTIDE SEQUENCE [LARGE SCALE GENOMIC DNA]</scope>
    <source>
        <strain>KIM10+ / Biovar Mediaevalis</strain>
    </source>
</reference>
<reference key="3">
    <citation type="journal article" date="2004" name="DNA Res.">
        <title>Complete genome sequence of Yersinia pestis strain 91001, an isolate avirulent to humans.</title>
        <authorList>
            <person name="Song Y."/>
            <person name="Tong Z."/>
            <person name="Wang J."/>
            <person name="Wang L."/>
            <person name="Guo Z."/>
            <person name="Han Y."/>
            <person name="Zhang J."/>
            <person name="Pei D."/>
            <person name="Zhou D."/>
            <person name="Qin H."/>
            <person name="Pang X."/>
            <person name="Han Y."/>
            <person name="Zhai J."/>
            <person name="Li M."/>
            <person name="Cui B."/>
            <person name="Qi Z."/>
            <person name="Jin L."/>
            <person name="Dai R."/>
            <person name="Chen F."/>
            <person name="Li S."/>
            <person name="Ye C."/>
            <person name="Du Z."/>
            <person name="Lin W."/>
            <person name="Wang J."/>
            <person name="Yu J."/>
            <person name="Yang H."/>
            <person name="Wang J."/>
            <person name="Huang P."/>
            <person name="Yang R."/>
        </authorList>
    </citation>
    <scope>NUCLEOTIDE SEQUENCE [LARGE SCALE GENOMIC DNA]</scope>
    <source>
        <strain>91001 / Biovar Mediaevalis</strain>
    </source>
</reference>
<protein>
    <recommendedName>
        <fullName>Histidine biosynthesis bifunctional protein HisIE</fullName>
    </recommendedName>
    <domain>
        <recommendedName>
            <fullName>Phosphoribosyl-AMP cyclohydrolase</fullName>
            <shortName>PRA-CH</shortName>
            <ecNumber>3.5.4.19</ecNumber>
        </recommendedName>
    </domain>
    <domain>
        <recommendedName>
            <fullName>Phosphoribosyl-ATP pyrophosphatase</fullName>
            <shortName>PRA-PH</shortName>
            <ecNumber>3.6.1.31</ecNumber>
        </recommendedName>
    </domain>
</protein>
<comment type="catalytic activity">
    <reaction>
        <text>1-(5-phospho-beta-D-ribosyl)-ATP + H2O = 1-(5-phospho-beta-D-ribosyl)-5'-AMP + diphosphate + H(+)</text>
        <dbReference type="Rhea" id="RHEA:22828"/>
        <dbReference type="ChEBI" id="CHEBI:15377"/>
        <dbReference type="ChEBI" id="CHEBI:15378"/>
        <dbReference type="ChEBI" id="CHEBI:33019"/>
        <dbReference type="ChEBI" id="CHEBI:59457"/>
        <dbReference type="ChEBI" id="CHEBI:73183"/>
        <dbReference type="EC" id="3.6.1.31"/>
    </reaction>
</comment>
<comment type="catalytic activity">
    <reaction>
        <text>1-(5-phospho-beta-D-ribosyl)-5'-AMP + H2O = 1-(5-phospho-beta-D-ribosyl)-5-[(5-phospho-beta-D-ribosylamino)methylideneamino]imidazole-4-carboxamide</text>
        <dbReference type="Rhea" id="RHEA:20049"/>
        <dbReference type="ChEBI" id="CHEBI:15377"/>
        <dbReference type="ChEBI" id="CHEBI:58435"/>
        <dbReference type="ChEBI" id="CHEBI:59457"/>
        <dbReference type="EC" id="3.5.4.19"/>
    </reaction>
</comment>
<comment type="pathway">
    <text>Amino-acid biosynthesis; L-histidine biosynthesis; L-histidine from 5-phospho-alpha-D-ribose 1-diphosphate: step 2/9.</text>
</comment>
<comment type="pathway">
    <text>Amino-acid biosynthesis; L-histidine biosynthesis; L-histidine from 5-phospho-alpha-D-ribose 1-diphosphate: step 3/9.</text>
</comment>
<comment type="subcellular location">
    <subcellularLocation>
        <location evidence="1">Cytoplasm</location>
    </subcellularLocation>
</comment>
<comment type="similarity">
    <text evidence="2">In the N-terminal section; belongs to the PRA-CH family.</text>
</comment>
<comment type="similarity">
    <text evidence="2">In the C-terminal section; belongs to the PRA-PH family.</text>
</comment>
<keyword id="KW-0028">Amino-acid biosynthesis</keyword>
<keyword id="KW-0067">ATP-binding</keyword>
<keyword id="KW-0963">Cytoplasm</keyword>
<keyword id="KW-0368">Histidine biosynthesis</keyword>
<keyword id="KW-0378">Hydrolase</keyword>
<keyword id="KW-0511">Multifunctional enzyme</keyword>
<keyword id="KW-0547">Nucleotide-binding</keyword>
<keyword id="KW-1185">Reference proteome</keyword>
<name>HIS2_YERPE</name>
<proteinExistence type="inferred from homology"/>
<dbReference type="EC" id="3.5.4.19"/>
<dbReference type="EC" id="3.6.1.31"/>
<dbReference type="EMBL" id="AL590842">
    <property type="protein sequence ID" value="CAL20188.1"/>
    <property type="molecule type" value="Genomic_DNA"/>
</dbReference>
<dbReference type="EMBL" id="AE009952">
    <property type="protein sequence ID" value="AAM86182.1"/>
    <property type="molecule type" value="Genomic_DNA"/>
</dbReference>
<dbReference type="EMBL" id="AE017042">
    <property type="protein sequence ID" value="AAS61672.1"/>
    <property type="molecule type" value="Genomic_DNA"/>
</dbReference>
<dbReference type="PIR" id="AB0188">
    <property type="entry name" value="AB0188"/>
</dbReference>
<dbReference type="RefSeq" id="WP_002211889.1">
    <property type="nucleotide sequence ID" value="NZ_WUCM01000031.1"/>
</dbReference>
<dbReference type="RefSeq" id="YP_002346558.1">
    <property type="nucleotide sequence ID" value="NC_003143.1"/>
</dbReference>
<dbReference type="SMR" id="Q8ZFY1"/>
<dbReference type="STRING" id="214092.YPO1542"/>
<dbReference type="PaxDb" id="214092-YPO1542"/>
<dbReference type="DNASU" id="1147575"/>
<dbReference type="EnsemblBacteria" id="AAS61672">
    <property type="protein sequence ID" value="AAS61672"/>
    <property type="gene ID" value="YP_1431"/>
</dbReference>
<dbReference type="GeneID" id="57977026"/>
<dbReference type="KEGG" id="ype:YPO1542"/>
<dbReference type="KEGG" id="ypk:y2628"/>
<dbReference type="KEGG" id="ypm:YP_1431"/>
<dbReference type="PATRIC" id="fig|214092.21.peg.1879"/>
<dbReference type="eggNOG" id="COG0139">
    <property type="taxonomic scope" value="Bacteria"/>
</dbReference>
<dbReference type="eggNOG" id="COG0140">
    <property type="taxonomic scope" value="Bacteria"/>
</dbReference>
<dbReference type="HOGENOM" id="CLU_048577_3_1_6"/>
<dbReference type="OMA" id="ERSCFHQ"/>
<dbReference type="OrthoDB" id="9795769at2"/>
<dbReference type="UniPathway" id="UPA00031">
    <property type="reaction ID" value="UER00007"/>
</dbReference>
<dbReference type="UniPathway" id="UPA00031">
    <property type="reaction ID" value="UER00008"/>
</dbReference>
<dbReference type="Proteomes" id="UP000000815">
    <property type="component" value="Chromosome"/>
</dbReference>
<dbReference type="Proteomes" id="UP000001019">
    <property type="component" value="Chromosome"/>
</dbReference>
<dbReference type="Proteomes" id="UP000002490">
    <property type="component" value="Chromosome"/>
</dbReference>
<dbReference type="GO" id="GO:0005737">
    <property type="term" value="C:cytoplasm"/>
    <property type="evidence" value="ECO:0007669"/>
    <property type="project" value="UniProtKB-SubCell"/>
</dbReference>
<dbReference type="GO" id="GO:0005524">
    <property type="term" value="F:ATP binding"/>
    <property type="evidence" value="ECO:0007669"/>
    <property type="project" value="UniProtKB-KW"/>
</dbReference>
<dbReference type="GO" id="GO:0004635">
    <property type="term" value="F:phosphoribosyl-AMP cyclohydrolase activity"/>
    <property type="evidence" value="ECO:0007669"/>
    <property type="project" value="UniProtKB-UniRule"/>
</dbReference>
<dbReference type="GO" id="GO:0004636">
    <property type="term" value="F:phosphoribosyl-ATP diphosphatase activity"/>
    <property type="evidence" value="ECO:0007669"/>
    <property type="project" value="UniProtKB-UniRule"/>
</dbReference>
<dbReference type="GO" id="GO:0000105">
    <property type="term" value="P:L-histidine biosynthetic process"/>
    <property type="evidence" value="ECO:0007669"/>
    <property type="project" value="UniProtKB-UniRule"/>
</dbReference>
<dbReference type="CDD" id="cd11534">
    <property type="entry name" value="NTP-PPase_HisIE_like"/>
    <property type="match status" value="1"/>
</dbReference>
<dbReference type="FunFam" id="1.10.287.1080:FF:000002">
    <property type="entry name" value="Histidine biosynthesis bifunctional protein HisIE"/>
    <property type="match status" value="1"/>
</dbReference>
<dbReference type="FunFam" id="3.10.20.810:FF:000001">
    <property type="entry name" value="Histidine biosynthesis bifunctional protein HisIE"/>
    <property type="match status" value="1"/>
</dbReference>
<dbReference type="Gene3D" id="1.10.287.1080">
    <property type="entry name" value="MazG-like"/>
    <property type="match status" value="1"/>
</dbReference>
<dbReference type="Gene3D" id="3.10.20.810">
    <property type="entry name" value="Phosphoribosyl-AMP cyclohydrolase"/>
    <property type="match status" value="1"/>
</dbReference>
<dbReference type="HAMAP" id="MF_01020">
    <property type="entry name" value="HisE"/>
    <property type="match status" value="1"/>
</dbReference>
<dbReference type="HAMAP" id="MF_01019">
    <property type="entry name" value="HisIE"/>
    <property type="match status" value="1"/>
</dbReference>
<dbReference type="InterPro" id="IPR023019">
    <property type="entry name" value="His_synth_HisIE"/>
</dbReference>
<dbReference type="InterPro" id="IPR008179">
    <property type="entry name" value="HisE"/>
</dbReference>
<dbReference type="InterPro" id="IPR021130">
    <property type="entry name" value="PRib-ATP_PPHydrolase-like"/>
</dbReference>
<dbReference type="InterPro" id="IPR002496">
    <property type="entry name" value="PRib_AMP_CycHydrolase_dom"/>
</dbReference>
<dbReference type="InterPro" id="IPR038019">
    <property type="entry name" value="PRib_AMP_CycHydrolase_sf"/>
</dbReference>
<dbReference type="NCBIfam" id="TIGR03188">
    <property type="entry name" value="histidine_hisI"/>
    <property type="match status" value="1"/>
</dbReference>
<dbReference type="NCBIfam" id="NF000768">
    <property type="entry name" value="PRK00051.1"/>
    <property type="match status" value="1"/>
</dbReference>
<dbReference type="NCBIfam" id="NF002747">
    <property type="entry name" value="PRK02759.1"/>
    <property type="match status" value="1"/>
</dbReference>
<dbReference type="PANTHER" id="PTHR42945">
    <property type="entry name" value="HISTIDINE BIOSYNTHESIS BIFUNCTIONAL PROTEIN"/>
    <property type="match status" value="1"/>
</dbReference>
<dbReference type="PANTHER" id="PTHR42945:SF9">
    <property type="entry name" value="HISTIDINE BIOSYNTHESIS BIFUNCTIONAL PROTEIN HISIE"/>
    <property type="match status" value="1"/>
</dbReference>
<dbReference type="Pfam" id="PF01502">
    <property type="entry name" value="PRA-CH"/>
    <property type="match status" value="1"/>
</dbReference>
<dbReference type="Pfam" id="PF01503">
    <property type="entry name" value="PRA-PH"/>
    <property type="match status" value="1"/>
</dbReference>
<dbReference type="SUPFAM" id="SSF101386">
    <property type="entry name" value="all-alpha NTP pyrophosphatases"/>
    <property type="match status" value="1"/>
</dbReference>
<dbReference type="SUPFAM" id="SSF141734">
    <property type="entry name" value="HisI-like"/>
    <property type="match status" value="1"/>
</dbReference>
<sequence>MLTEQQINQLDWEKVDHLMPAIVQHAVSGEVLMMGYMNQEALAVTEKTGKVTFFSRTKQRLWTKGESSGHFLNVVNIYPDCDNDTLLILVKPIGPTCHLGNSSCFAPAASDWSFLYQLEQLLASRKSADPASSYTAKLYASGTKRIAQKVGEEGVETALAATVNDREELTNEASDLMYHLLVLLQDQDLDFSTVIGRLRERHEK</sequence>
<evidence type="ECO:0000250" key="1"/>
<evidence type="ECO:0000305" key="2"/>
<feature type="chain" id="PRO_0000136454" description="Histidine biosynthesis bifunctional protein HisIE">
    <location>
        <begin position="1"/>
        <end position="204"/>
    </location>
</feature>
<feature type="region of interest" description="Phosphoribosyl-AMP cyclohydrolase">
    <location>
        <begin position="1"/>
        <end position="114"/>
    </location>
</feature>
<feature type="region of interest" description="Phosphoribosyl-ATP pyrophosphohydrolase">
    <location>
        <begin position="115"/>
        <end position="204"/>
    </location>
</feature>
<accession>Q8ZFY1</accession>
<accession>Q0WGN0</accession>
<gene>
    <name type="primary">hisI</name>
    <name type="synonym">hisIE</name>
    <name type="ordered locus">YPO1542</name>
    <name type="ordered locus">y2628</name>
    <name type="ordered locus">YP_1431</name>
</gene>